<keyword id="KW-0067">ATP-binding</keyword>
<keyword id="KW-0963">Cytoplasm</keyword>
<keyword id="KW-0547">Nucleotide-binding</keyword>
<keyword id="KW-1185">Reference proteome</keyword>
<keyword id="KW-0694">RNA-binding</keyword>
<keyword id="KW-0784">Thiamine biosynthesis</keyword>
<keyword id="KW-0808">Transferase</keyword>
<keyword id="KW-0820">tRNA-binding</keyword>
<accession>A9NHG7</accession>
<sequence length="412" mass="46583">MEKAILIRFGDLVLKGKNKPKFIGQIKKNIRSKLKNVNVEYTFQHDRIYVHFNEVDSDEVIKQLGYVSGIHSFSYIYKTTKDIESIAQLAKEVIQKEVKLPTTFKIETKRTDKNYPLKSLEISQKVASLVLPSFDGLKVEVRNPETVLDIELRSEGTYIYVGKIPALGGFPIGLGGKGLVMLSGGIDSPVAAHLMMKQGIDVELFHFESTPLTPLESVQKVIEIAKKLAYYTPYNKIKLHLVPFTKIHEAILSYVADPYIITIMRRMFYRLGEIYANQHGLDTLINGESVGQVASQTLSSIKVIENVTSIPILRPVITYDKNDIINISKKIDTYDISILPFNDCCSIYVPRNPVTKPTIDQALKEESRFEFKELLEDALKNVQTMIITPTTDFEIALHGFDVKDALSSYTQE</sequence>
<gene>
    <name evidence="1" type="primary">thiI</name>
    <name type="ordered locus">ACL_1198</name>
</gene>
<proteinExistence type="inferred from homology"/>
<protein>
    <recommendedName>
        <fullName evidence="1">Probable tRNA sulfurtransferase</fullName>
        <ecNumber evidence="1">2.8.1.4</ecNumber>
    </recommendedName>
    <alternativeName>
        <fullName evidence="1">Sulfur carrier protein ThiS sulfurtransferase</fullName>
    </alternativeName>
    <alternativeName>
        <fullName evidence="1">Thiamine biosynthesis protein ThiI</fullName>
    </alternativeName>
    <alternativeName>
        <fullName evidence="1">tRNA 4-thiouridine synthase</fullName>
    </alternativeName>
</protein>
<evidence type="ECO:0000255" key="1">
    <source>
        <dbReference type="HAMAP-Rule" id="MF_00021"/>
    </source>
</evidence>
<comment type="function">
    <text evidence="1">Catalyzes the ATP-dependent transfer of a sulfur to tRNA to produce 4-thiouridine in position 8 of tRNAs, which functions as a near-UV photosensor. Also catalyzes the transfer of sulfur to the sulfur carrier protein ThiS, forming ThiS-thiocarboxylate. This is a step in the synthesis of thiazole, in the thiamine biosynthesis pathway. The sulfur is donated as persulfide by IscS.</text>
</comment>
<comment type="catalytic activity">
    <reaction evidence="1">
        <text>[ThiI sulfur-carrier protein]-S-sulfanyl-L-cysteine + a uridine in tRNA + 2 reduced [2Fe-2S]-[ferredoxin] + ATP + H(+) = [ThiI sulfur-carrier protein]-L-cysteine + a 4-thiouridine in tRNA + 2 oxidized [2Fe-2S]-[ferredoxin] + AMP + diphosphate</text>
        <dbReference type="Rhea" id="RHEA:24176"/>
        <dbReference type="Rhea" id="RHEA-COMP:10000"/>
        <dbReference type="Rhea" id="RHEA-COMP:10001"/>
        <dbReference type="Rhea" id="RHEA-COMP:13337"/>
        <dbReference type="Rhea" id="RHEA-COMP:13338"/>
        <dbReference type="Rhea" id="RHEA-COMP:13339"/>
        <dbReference type="Rhea" id="RHEA-COMP:13340"/>
        <dbReference type="ChEBI" id="CHEBI:15378"/>
        <dbReference type="ChEBI" id="CHEBI:29950"/>
        <dbReference type="ChEBI" id="CHEBI:30616"/>
        <dbReference type="ChEBI" id="CHEBI:33019"/>
        <dbReference type="ChEBI" id="CHEBI:33737"/>
        <dbReference type="ChEBI" id="CHEBI:33738"/>
        <dbReference type="ChEBI" id="CHEBI:61963"/>
        <dbReference type="ChEBI" id="CHEBI:65315"/>
        <dbReference type="ChEBI" id="CHEBI:136798"/>
        <dbReference type="ChEBI" id="CHEBI:456215"/>
        <dbReference type="EC" id="2.8.1.4"/>
    </reaction>
</comment>
<comment type="catalytic activity">
    <reaction evidence="1">
        <text>[ThiS sulfur-carrier protein]-C-terminal Gly-Gly-AMP + S-sulfanyl-L-cysteinyl-[cysteine desulfurase] + AH2 = [ThiS sulfur-carrier protein]-C-terminal-Gly-aminoethanethioate + L-cysteinyl-[cysteine desulfurase] + A + AMP + 2 H(+)</text>
        <dbReference type="Rhea" id="RHEA:43340"/>
        <dbReference type="Rhea" id="RHEA-COMP:12157"/>
        <dbReference type="Rhea" id="RHEA-COMP:12158"/>
        <dbReference type="Rhea" id="RHEA-COMP:12910"/>
        <dbReference type="Rhea" id="RHEA-COMP:19908"/>
        <dbReference type="ChEBI" id="CHEBI:13193"/>
        <dbReference type="ChEBI" id="CHEBI:15378"/>
        <dbReference type="ChEBI" id="CHEBI:17499"/>
        <dbReference type="ChEBI" id="CHEBI:29950"/>
        <dbReference type="ChEBI" id="CHEBI:61963"/>
        <dbReference type="ChEBI" id="CHEBI:90618"/>
        <dbReference type="ChEBI" id="CHEBI:232372"/>
        <dbReference type="ChEBI" id="CHEBI:456215"/>
    </reaction>
</comment>
<comment type="pathway">
    <text evidence="1">Cofactor biosynthesis; thiamine diphosphate biosynthesis.</text>
</comment>
<comment type="subcellular location">
    <subcellularLocation>
        <location evidence="1">Cytoplasm</location>
    </subcellularLocation>
</comment>
<comment type="similarity">
    <text evidence="1">Belongs to the ThiI family.</text>
</comment>
<reference key="1">
    <citation type="journal article" date="2011" name="J. Bacteriol.">
        <title>Complete genome and proteome of Acholeplasma laidlawii.</title>
        <authorList>
            <person name="Lazarev V.N."/>
            <person name="Levitskii S.A."/>
            <person name="Basovskii Y.I."/>
            <person name="Chukin M.M."/>
            <person name="Akopian T.A."/>
            <person name="Vereshchagin V.V."/>
            <person name="Kostrjukova E.S."/>
            <person name="Kovaleva G.Y."/>
            <person name="Kazanov M.D."/>
            <person name="Malko D.B."/>
            <person name="Vitreschak A.G."/>
            <person name="Sernova N.V."/>
            <person name="Gelfand M.S."/>
            <person name="Demina I.A."/>
            <person name="Serebryakova M.V."/>
            <person name="Galyamina M.A."/>
            <person name="Vtyurin N.N."/>
            <person name="Rogov S.I."/>
            <person name="Alexeev D.G."/>
            <person name="Ladygina V.G."/>
            <person name="Govorun V.M."/>
        </authorList>
    </citation>
    <scope>NUCLEOTIDE SEQUENCE [LARGE SCALE GENOMIC DNA]</scope>
    <source>
        <strain>PG-8A</strain>
    </source>
</reference>
<organism>
    <name type="scientific">Acholeplasma laidlawii (strain PG-8A)</name>
    <dbReference type="NCBI Taxonomy" id="441768"/>
    <lineage>
        <taxon>Bacteria</taxon>
        <taxon>Bacillati</taxon>
        <taxon>Mycoplasmatota</taxon>
        <taxon>Mollicutes</taxon>
        <taxon>Acholeplasmatales</taxon>
        <taxon>Acholeplasmataceae</taxon>
        <taxon>Acholeplasma</taxon>
    </lineage>
</organism>
<feature type="chain" id="PRO_1000074196" description="Probable tRNA sulfurtransferase">
    <location>
        <begin position="1"/>
        <end position="412"/>
    </location>
</feature>
<feature type="domain" description="THUMP" evidence="1">
    <location>
        <begin position="58"/>
        <end position="163"/>
    </location>
</feature>
<feature type="binding site" evidence="1">
    <location>
        <begin position="181"/>
        <end position="182"/>
    </location>
    <ligand>
        <name>ATP</name>
        <dbReference type="ChEBI" id="CHEBI:30616"/>
    </ligand>
</feature>
<feature type="binding site" evidence="1">
    <location>
        <begin position="206"/>
        <end position="207"/>
    </location>
    <ligand>
        <name>ATP</name>
        <dbReference type="ChEBI" id="CHEBI:30616"/>
    </ligand>
</feature>
<feature type="binding site" evidence="1">
    <location>
        <position position="265"/>
    </location>
    <ligand>
        <name>ATP</name>
        <dbReference type="ChEBI" id="CHEBI:30616"/>
    </ligand>
</feature>
<feature type="binding site" evidence="1">
    <location>
        <position position="287"/>
    </location>
    <ligand>
        <name>ATP</name>
        <dbReference type="ChEBI" id="CHEBI:30616"/>
    </ligand>
</feature>
<feature type="binding site" evidence="1">
    <location>
        <position position="296"/>
    </location>
    <ligand>
        <name>ATP</name>
        <dbReference type="ChEBI" id="CHEBI:30616"/>
    </ligand>
</feature>
<name>THII_ACHLI</name>
<dbReference type="EC" id="2.8.1.4" evidence="1"/>
<dbReference type="EMBL" id="CP000896">
    <property type="protein sequence ID" value="ABX81797.1"/>
    <property type="molecule type" value="Genomic_DNA"/>
</dbReference>
<dbReference type="RefSeq" id="WP_012243128.1">
    <property type="nucleotide sequence ID" value="NC_010163.1"/>
</dbReference>
<dbReference type="SMR" id="A9NHG7"/>
<dbReference type="STRING" id="441768.ACL_1198"/>
<dbReference type="GeneID" id="41339337"/>
<dbReference type="KEGG" id="acl:ACL_1198"/>
<dbReference type="eggNOG" id="COG0301">
    <property type="taxonomic scope" value="Bacteria"/>
</dbReference>
<dbReference type="HOGENOM" id="CLU_037952_4_0_14"/>
<dbReference type="UniPathway" id="UPA00060"/>
<dbReference type="Proteomes" id="UP000008558">
    <property type="component" value="Chromosome"/>
</dbReference>
<dbReference type="GO" id="GO:0005829">
    <property type="term" value="C:cytosol"/>
    <property type="evidence" value="ECO:0007669"/>
    <property type="project" value="TreeGrafter"/>
</dbReference>
<dbReference type="GO" id="GO:0005524">
    <property type="term" value="F:ATP binding"/>
    <property type="evidence" value="ECO:0007669"/>
    <property type="project" value="UniProtKB-UniRule"/>
</dbReference>
<dbReference type="GO" id="GO:0004810">
    <property type="term" value="F:CCA tRNA nucleotidyltransferase activity"/>
    <property type="evidence" value="ECO:0007669"/>
    <property type="project" value="InterPro"/>
</dbReference>
<dbReference type="GO" id="GO:0000049">
    <property type="term" value="F:tRNA binding"/>
    <property type="evidence" value="ECO:0007669"/>
    <property type="project" value="UniProtKB-UniRule"/>
</dbReference>
<dbReference type="GO" id="GO:0140741">
    <property type="term" value="F:tRNA-uracil-4 sulfurtransferase activity"/>
    <property type="evidence" value="ECO:0007669"/>
    <property type="project" value="UniProtKB-EC"/>
</dbReference>
<dbReference type="GO" id="GO:0009228">
    <property type="term" value="P:thiamine biosynthetic process"/>
    <property type="evidence" value="ECO:0007669"/>
    <property type="project" value="UniProtKB-KW"/>
</dbReference>
<dbReference type="GO" id="GO:0009229">
    <property type="term" value="P:thiamine diphosphate biosynthetic process"/>
    <property type="evidence" value="ECO:0007669"/>
    <property type="project" value="UniProtKB-UniRule"/>
</dbReference>
<dbReference type="GO" id="GO:0052837">
    <property type="term" value="P:thiazole biosynthetic process"/>
    <property type="evidence" value="ECO:0007669"/>
    <property type="project" value="TreeGrafter"/>
</dbReference>
<dbReference type="GO" id="GO:0002937">
    <property type="term" value="P:tRNA 4-thiouridine biosynthesis"/>
    <property type="evidence" value="ECO:0007669"/>
    <property type="project" value="TreeGrafter"/>
</dbReference>
<dbReference type="CDD" id="cd01712">
    <property type="entry name" value="PPase_ThiI"/>
    <property type="match status" value="1"/>
</dbReference>
<dbReference type="CDD" id="cd11716">
    <property type="entry name" value="THUMP_ThiI"/>
    <property type="match status" value="1"/>
</dbReference>
<dbReference type="FunFam" id="3.40.50.620:FF:000053">
    <property type="entry name" value="Probable tRNA sulfurtransferase"/>
    <property type="match status" value="1"/>
</dbReference>
<dbReference type="Gene3D" id="3.30.2130.30">
    <property type="match status" value="1"/>
</dbReference>
<dbReference type="Gene3D" id="3.40.50.620">
    <property type="entry name" value="HUPs"/>
    <property type="match status" value="1"/>
</dbReference>
<dbReference type="HAMAP" id="MF_00021">
    <property type="entry name" value="ThiI"/>
    <property type="match status" value="1"/>
</dbReference>
<dbReference type="InterPro" id="IPR014729">
    <property type="entry name" value="Rossmann-like_a/b/a_fold"/>
</dbReference>
<dbReference type="InterPro" id="IPR020536">
    <property type="entry name" value="ThiI_AANH"/>
</dbReference>
<dbReference type="InterPro" id="IPR054173">
    <property type="entry name" value="ThiI_fer"/>
</dbReference>
<dbReference type="InterPro" id="IPR049961">
    <property type="entry name" value="ThiI_N"/>
</dbReference>
<dbReference type="InterPro" id="IPR004114">
    <property type="entry name" value="THUMP_dom"/>
</dbReference>
<dbReference type="InterPro" id="IPR049962">
    <property type="entry name" value="THUMP_ThiI"/>
</dbReference>
<dbReference type="InterPro" id="IPR003720">
    <property type="entry name" value="tRNA_STrfase"/>
</dbReference>
<dbReference type="InterPro" id="IPR050102">
    <property type="entry name" value="tRNA_sulfurtransferase_ThiI"/>
</dbReference>
<dbReference type="NCBIfam" id="TIGR00342">
    <property type="entry name" value="tRNA uracil 4-sulfurtransferase ThiI"/>
    <property type="match status" value="1"/>
</dbReference>
<dbReference type="PANTHER" id="PTHR43209">
    <property type="entry name" value="TRNA SULFURTRANSFERASE"/>
    <property type="match status" value="1"/>
</dbReference>
<dbReference type="PANTHER" id="PTHR43209:SF1">
    <property type="entry name" value="TRNA SULFURTRANSFERASE"/>
    <property type="match status" value="1"/>
</dbReference>
<dbReference type="Pfam" id="PF02568">
    <property type="entry name" value="ThiI"/>
    <property type="match status" value="1"/>
</dbReference>
<dbReference type="Pfam" id="PF22025">
    <property type="entry name" value="ThiI_fer"/>
    <property type="match status" value="1"/>
</dbReference>
<dbReference type="Pfam" id="PF02926">
    <property type="entry name" value="THUMP"/>
    <property type="match status" value="1"/>
</dbReference>
<dbReference type="SMART" id="SM00981">
    <property type="entry name" value="THUMP"/>
    <property type="match status" value="1"/>
</dbReference>
<dbReference type="SUPFAM" id="SSF52402">
    <property type="entry name" value="Adenine nucleotide alpha hydrolases-like"/>
    <property type="match status" value="1"/>
</dbReference>
<dbReference type="SUPFAM" id="SSF143437">
    <property type="entry name" value="THUMP domain-like"/>
    <property type="match status" value="1"/>
</dbReference>
<dbReference type="PROSITE" id="PS51165">
    <property type="entry name" value="THUMP"/>
    <property type="match status" value="1"/>
</dbReference>